<name>ENGB_PSEPK</name>
<feature type="chain" id="PRO_0000157771" description="Probable GTP-binding protein EngB">
    <location>
        <begin position="1"/>
        <end position="210"/>
    </location>
</feature>
<feature type="domain" description="EngB-type G" evidence="1">
    <location>
        <begin position="30"/>
        <end position="204"/>
    </location>
</feature>
<feature type="binding site" evidence="1">
    <location>
        <begin position="38"/>
        <end position="45"/>
    </location>
    <ligand>
        <name>GTP</name>
        <dbReference type="ChEBI" id="CHEBI:37565"/>
    </ligand>
</feature>
<feature type="binding site" evidence="1">
    <location>
        <position position="45"/>
    </location>
    <ligand>
        <name>Mg(2+)</name>
        <dbReference type="ChEBI" id="CHEBI:18420"/>
    </ligand>
</feature>
<feature type="binding site" evidence="1">
    <location>
        <begin position="64"/>
        <end position="68"/>
    </location>
    <ligand>
        <name>GTP</name>
        <dbReference type="ChEBI" id="CHEBI:37565"/>
    </ligand>
</feature>
<feature type="binding site" evidence="1">
    <location>
        <position position="66"/>
    </location>
    <ligand>
        <name>Mg(2+)</name>
        <dbReference type="ChEBI" id="CHEBI:18420"/>
    </ligand>
</feature>
<feature type="binding site" evidence="1">
    <location>
        <begin position="82"/>
        <end position="85"/>
    </location>
    <ligand>
        <name>GTP</name>
        <dbReference type="ChEBI" id="CHEBI:37565"/>
    </ligand>
</feature>
<feature type="binding site" evidence="1">
    <location>
        <begin position="149"/>
        <end position="152"/>
    </location>
    <ligand>
        <name>GTP</name>
        <dbReference type="ChEBI" id="CHEBI:37565"/>
    </ligand>
</feature>
<feature type="binding site" evidence="1">
    <location>
        <begin position="182"/>
        <end position="185"/>
    </location>
    <ligand>
        <name>GTP</name>
        <dbReference type="ChEBI" id="CHEBI:37565"/>
    </ligand>
</feature>
<proteinExistence type="inferred from homology"/>
<reference key="1">
    <citation type="journal article" date="2002" name="Environ. Microbiol.">
        <title>Complete genome sequence and comparative analysis of the metabolically versatile Pseudomonas putida KT2440.</title>
        <authorList>
            <person name="Nelson K.E."/>
            <person name="Weinel C."/>
            <person name="Paulsen I.T."/>
            <person name="Dodson R.J."/>
            <person name="Hilbert H."/>
            <person name="Martins dos Santos V.A.P."/>
            <person name="Fouts D.E."/>
            <person name="Gill S.R."/>
            <person name="Pop M."/>
            <person name="Holmes M."/>
            <person name="Brinkac L.M."/>
            <person name="Beanan M.J."/>
            <person name="DeBoy R.T."/>
            <person name="Daugherty S.C."/>
            <person name="Kolonay J.F."/>
            <person name="Madupu R."/>
            <person name="Nelson W.C."/>
            <person name="White O."/>
            <person name="Peterson J.D."/>
            <person name="Khouri H.M."/>
            <person name="Hance I."/>
            <person name="Chris Lee P."/>
            <person name="Holtzapple E.K."/>
            <person name="Scanlan D."/>
            <person name="Tran K."/>
            <person name="Moazzez A."/>
            <person name="Utterback T.R."/>
            <person name="Rizzo M."/>
            <person name="Lee K."/>
            <person name="Kosack D."/>
            <person name="Moestl D."/>
            <person name="Wedler H."/>
            <person name="Lauber J."/>
            <person name="Stjepandic D."/>
            <person name="Hoheisel J."/>
            <person name="Straetz M."/>
            <person name="Heim S."/>
            <person name="Kiewitz C."/>
            <person name="Eisen J.A."/>
            <person name="Timmis K.N."/>
            <person name="Duesterhoeft A."/>
            <person name="Tuemmler B."/>
            <person name="Fraser C.M."/>
        </authorList>
    </citation>
    <scope>NUCLEOTIDE SEQUENCE [LARGE SCALE GENOMIC DNA]</scope>
    <source>
        <strain>ATCC 47054 / DSM 6125 / CFBP 8728 / NCIMB 11950 / KT2440</strain>
    </source>
</reference>
<gene>
    <name evidence="1" type="primary">engB</name>
    <name type="ordered locus">PP_0124</name>
</gene>
<keyword id="KW-0131">Cell cycle</keyword>
<keyword id="KW-0132">Cell division</keyword>
<keyword id="KW-0342">GTP-binding</keyword>
<keyword id="KW-0460">Magnesium</keyword>
<keyword id="KW-0479">Metal-binding</keyword>
<keyword id="KW-0547">Nucleotide-binding</keyword>
<keyword id="KW-1185">Reference proteome</keyword>
<keyword id="KW-0717">Septation</keyword>
<organism>
    <name type="scientific">Pseudomonas putida (strain ATCC 47054 / DSM 6125 / CFBP 8728 / NCIMB 11950 / KT2440)</name>
    <dbReference type="NCBI Taxonomy" id="160488"/>
    <lineage>
        <taxon>Bacteria</taxon>
        <taxon>Pseudomonadati</taxon>
        <taxon>Pseudomonadota</taxon>
        <taxon>Gammaproteobacteria</taxon>
        <taxon>Pseudomonadales</taxon>
        <taxon>Pseudomonadaceae</taxon>
        <taxon>Pseudomonas</taxon>
    </lineage>
</organism>
<evidence type="ECO:0000255" key="1">
    <source>
        <dbReference type="HAMAP-Rule" id="MF_00321"/>
    </source>
</evidence>
<sequence length="210" mass="23440">MQVKNPILGLCQKAKFALSAAKVEQCPDDQGYEVAFAGRSNAGKSSALNTLTHASLARTSKTPGRTQLLNFFSLDDERRLVDLPGYGYAKVPIPLKQHWQKHLEAYLGSRECLRGVILMMDVRHPMTDFDKMMLDWAKASSMPMHILLTKADKLTHGAGKNTLLKVQSEIRKGWGDGVTIQLFSAPKRLGVEDAYRVLADWMELEDKPVV</sequence>
<dbReference type="EMBL" id="AE015451">
    <property type="protein sequence ID" value="AAN65758.1"/>
    <property type="molecule type" value="Genomic_DNA"/>
</dbReference>
<dbReference type="RefSeq" id="NP_742294.1">
    <property type="nucleotide sequence ID" value="NC_002947.4"/>
</dbReference>
<dbReference type="SMR" id="Q88RK5"/>
<dbReference type="STRING" id="160488.PP_0124"/>
<dbReference type="PaxDb" id="160488-PP_0124"/>
<dbReference type="KEGG" id="ppu:PP_0124"/>
<dbReference type="PATRIC" id="fig|160488.4.peg.126"/>
<dbReference type="eggNOG" id="COG0218">
    <property type="taxonomic scope" value="Bacteria"/>
</dbReference>
<dbReference type="HOGENOM" id="CLU_033732_1_0_6"/>
<dbReference type="OrthoDB" id="9804921at2"/>
<dbReference type="PhylomeDB" id="Q88RK5"/>
<dbReference type="BioCyc" id="PPUT160488:G1G01-130-MONOMER"/>
<dbReference type="Proteomes" id="UP000000556">
    <property type="component" value="Chromosome"/>
</dbReference>
<dbReference type="GO" id="GO:0005829">
    <property type="term" value="C:cytosol"/>
    <property type="evidence" value="ECO:0007669"/>
    <property type="project" value="TreeGrafter"/>
</dbReference>
<dbReference type="GO" id="GO:0005525">
    <property type="term" value="F:GTP binding"/>
    <property type="evidence" value="ECO:0007669"/>
    <property type="project" value="UniProtKB-UniRule"/>
</dbReference>
<dbReference type="GO" id="GO:0046872">
    <property type="term" value="F:metal ion binding"/>
    <property type="evidence" value="ECO:0007669"/>
    <property type="project" value="UniProtKB-KW"/>
</dbReference>
<dbReference type="GO" id="GO:0000917">
    <property type="term" value="P:division septum assembly"/>
    <property type="evidence" value="ECO:0007669"/>
    <property type="project" value="UniProtKB-KW"/>
</dbReference>
<dbReference type="CDD" id="cd01876">
    <property type="entry name" value="YihA_EngB"/>
    <property type="match status" value="1"/>
</dbReference>
<dbReference type="FunFam" id="3.40.50.300:FF:000098">
    <property type="entry name" value="Probable GTP-binding protein EngB"/>
    <property type="match status" value="1"/>
</dbReference>
<dbReference type="Gene3D" id="3.40.50.300">
    <property type="entry name" value="P-loop containing nucleotide triphosphate hydrolases"/>
    <property type="match status" value="1"/>
</dbReference>
<dbReference type="HAMAP" id="MF_00321">
    <property type="entry name" value="GTPase_EngB"/>
    <property type="match status" value="1"/>
</dbReference>
<dbReference type="InterPro" id="IPR030393">
    <property type="entry name" value="G_ENGB_dom"/>
</dbReference>
<dbReference type="InterPro" id="IPR006073">
    <property type="entry name" value="GTP-bd"/>
</dbReference>
<dbReference type="InterPro" id="IPR019987">
    <property type="entry name" value="GTP-bd_ribosome_bio_YsxC"/>
</dbReference>
<dbReference type="InterPro" id="IPR027417">
    <property type="entry name" value="P-loop_NTPase"/>
</dbReference>
<dbReference type="NCBIfam" id="TIGR03598">
    <property type="entry name" value="GTPase_YsxC"/>
    <property type="match status" value="1"/>
</dbReference>
<dbReference type="PANTHER" id="PTHR11649:SF13">
    <property type="entry name" value="ENGB-TYPE G DOMAIN-CONTAINING PROTEIN"/>
    <property type="match status" value="1"/>
</dbReference>
<dbReference type="PANTHER" id="PTHR11649">
    <property type="entry name" value="MSS1/TRME-RELATED GTP-BINDING PROTEIN"/>
    <property type="match status" value="1"/>
</dbReference>
<dbReference type="Pfam" id="PF01926">
    <property type="entry name" value="MMR_HSR1"/>
    <property type="match status" value="1"/>
</dbReference>
<dbReference type="SUPFAM" id="SSF52540">
    <property type="entry name" value="P-loop containing nucleoside triphosphate hydrolases"/>
    <property type="match status" value="1"/>
</dbReference>
<dbReference type="PROSITE" id="PS51706">
    <property type="entry name" value="G_ENGB"/>
    <property type="match status" value="1"/>
</dbReference>
<protein>
    <recommendedName>
        <fullName evidence="1">Probable GTP-binding protein EngB</fullName>
    </recommendedName>
</protein>
<comment type="function">
    <text evidence="1">Necessary for normal cell division and for the maintenance of normal septation.</text>
</comment>
<comment type="cofactor">
    <cofactor evidence="1">
        <name>Mg(2+)</name>
        <dbReference type="ChEBI" id="CHEBI:18420"/>
    </cofactor>
</comment>
<comment type="similarity">
    <text evidence="1">Belongs to the TRAFAC class TrmE-Era-EngA-EngB-Septin-like GTPase superfamily. EngB GTPase family.</text>
</comment>
<accession>Q88RK5</accession>